<accession>Q6PQQ3</accession>
<accession>Q9FIE2</accession>
<dbReference type="EMBL" id="AY585685">
    <property type="protein sequence ID" value="AAS97942.1"/>
    <property type="molecule type" value="mRNA"/>
</dbReference>
<dbReference type="EMBL" id="AB016891">
    <property type="protein sequence ID" value="BAB08476.1"/>
    <property type="status" value="ALT_SEQ"/>
    <property type="molecule type" value="Genomic_DNA"/>
</dbReference>
<dbReference type="EMBL" id="CP002688">
    <property type="protein sequence ID" value="AED96895.1"/>
    <property type="molecule type" value="Genomic_DNA"/>
</dbReference>
<dbReference type="RefSeq" id="NP_200549.2">
    <property type="nucleotide sequence ID" value="NM_125122.4"/>
</dbReference>
<dbReference type="SMR" id="Q6PQQ3"/>
<dbReference type="BioGRID" id="21089">
    <property type="interactions" value="1"/>
</dbReference>
<dbReference type="FunCoup" id="Q6PQQ3">
    <property type="interactions" value="43"/>
</dbReference>
<dbReference type="IntAct" id="Q6PQQ3">
    <property type="interactions" value="2"/>
</dbReference>
<dbReference type="STRING" id="3702.Q6PQQ3"/>
<dbReference type="PaxDb" id="3702-AT5G57390.1"/>
<dbReference type="ProteomicsDB" id="244935"/>
<dbReference type="EnsemblPlants" id="AT5G57390.1">
    <property type="protein sequence ID" value="AT5G57390.1"/>
    <property type="gene ID" value="AT5G57390"/>
</dbReference>
<dbReference type="GeneID" id="835845"/>
<dbReference type="Gramene" id="AT5G57390.1">
    <property type="protein sequence ID" value="AT5G57390.1"/>
    <property type="gene ID" value="AT5G57390"/>
</dbReference>
<dbReference type="KEGG" id="ath:AT5G57390"/>
<dbReference type="Araport" id="AT5G57390"/>
<dbReference type="TAIR" id="AT5G57390">
    <property type="gene designation" value="AIL5"/>
</dbReference>
<dbReference type="eggNOG" id="ENOG502QR5R">
    <property type="taxonomic scope" value="Eukaryota"/>
</dbReference>
<dbReference type="HOGENOM" id="CLU_013549_5_0_1"/>
<dbReference type="InParanoid" id="Q6PQQ3"/>
<dbReference type="OMA" id="TFQTHAK"/>
<dbReference type="PhylomeDB" id="Q6PQQ3"/>
<dbReference type="PRO" id="PR:Q6PQQ3"/>
<dbReference type="Proteomes" id="UP000006548">
    <property type="component" value="Chromosome 5"/>
</dbReference>
<dbReference type="ExpressionAtlas" id="Q6PQQ3">
    <property type="expression patterns" value="baseline and differential"/>
</dbReference>
<dbReference type="GO" id="GO:0005634">
    <property type="term" value="C:nucleus"/>
    <property type="evidence" value="ECO:0000314"/>
    <property type="project" value="TAIR"/>
</dbReference>
<dbReference type="GO" id="GO:0003700">
    <property type="term" value="F:DNA-binding transcription factor activity"/>
    <property type="evidence" value="ECO:0000250"/>
    <property type="project" value="TAIR"/>
</dbReference>
<dbReference type="GO" id="GO:0000976">
    <property type="term" value="F:transcription cis-regulatory region binding"/>
    <property type="evidence" value="ECO:0000353"/>
    <property type="project" value="TAIR"/>
</dbReference>
<dbReference type="GO" id="GO:1990110">
    <property type="term" value="P:callus formation"/>
    <property type="evidence" value="ECO:0000316"/>
    <property type="project" value="TAIR"/>
</dbReference>
<dbReference type="GO" id="GO:0009873">
    <property type="term" value="P:ethylene-activated signaling pathway"/>
    <property type="evidence" value="ECO:0007669"/>
    <property type="project" value="UniProtKB-KW"/>
</dbReference>
<dbReference type="GO" id="GO:0010311">
    <property type="term" value="P:lateral root formation"/>
    <property type="evidence" value="ECO:0000316"/>
    <property type="project" value="TAIR"/>
</dbReference>
<dbReference type="GO" id="GO:0060772">
    <property type="term" value="P:leaf phyllotactic patterning"/>
    <property type="evidence" value="ECO:0000316"/>
    <property type="project" value="TAIR"/>
</dbReference>
<dbReference type="GO" id="GO:0060771">
    <property type="term" value="P:phyllotactic patterning"/>
    <property type="evidence" value="ECO:0000316"/>
    <property type="project" value="TAIR"/>
</dbReference>
<dbReference type="GO" id="GO:0040019">
    <property type="term" value="P:positive regulation of embryonic development"/>
    <property type="evidence" value="ECO:0000315"/>
    <property type="project" value="TAIR"/>
</dbReference>
<dbReference type="GO" id="GO:0009791">
    <property type="term" value="P:post-embryonic development"/>
    <property type="evidence" value="ECO:0000315"/>
    <property type="project" value="TAIR"/>
</dbReference>
<dbReference type="GO" id="GO:0048364">
    <property type="term" value="P:root development"/>
    <property type="evidence" value="ECO:0000315"/>
    <property type="project" value="TAIR"/>
</dbReference>
<dbReference type="GO" id="GO:0009845">
    <property type="term" value="P:seed germination"/>
    <property type="evidence" value="ECO:0000315"/>
    <property type="project" value="TAIR"/>
</dbReference>
<dbReference type="CDD" id="cd00018">
    <property type="entry name" value="AP2"/>
    <property type="match status" value="2"/>
</dbReference>
<dbReference type="FunFam" id="3.30.730.10:FF:000002">
    <property type="entry name" value="AP2-like ethylene-responsive transcription factor"/>
    <property type="match status" value="1"/>
</dbReference>
<dbReference type="FunFam" id="3.30.730.10:FF:000003">
    <property type="entry name" value="AP2-like ethylene-responsive transcription factor ANT"/>
    <property type="match status" value="1"/>
</dbReference>
<dbReference type="Gene3D" id="3.30.730.10">
    <property type="entry name" value="AP2/ERF domain"/>
    <property type="match status" value="2"/>
</dbReference>
<dbReference type="InterPro" id="IPR001471">
    <property type="entry name" value="AP2/ERF_dom"/>
</dbReference>
<dbReference type="InterPro" id="IPR036955">
    <property type="entry name" value="AP2/ERF_dom_sf"/>
</dbReference>
<dbReference type="InterPro" id="IPR016177">
    <property type="entry name" value="DNA-bd_dom_sf"/>
</dbReference>
<dbReference type="PANTHER" id="PTHR32467">
    <property type="entry name" value="AP2-LIKE ETHYLENE-RESPONSIVE TRANSCRIPTION FACTOR"/>
    <property type="match status" value="1"/>
</dbReference>
<dbReference type="PANTHER" id="PTHR32467:SF99">
    <property type="entry name" value="AP2-LIKE ETHYLENE-RESPONSIVE TRANSCRIPTION FACTOR AIL5"/>
    <property type="match status" value="1"/>
</dbReference>
<dbReference type="Pfam" id="PF00847">
    <property type="entry name" value="AP2"/>
    <property type="match status" value="2"/>
</dbReference>
<dbReference type="PRINTS" id="PR00367">
    <property type="entry name" value="ETHRSPELEMNT"/>
</dbReference>
<dbReference type="SMART" id="SM00380">
    <property type="entry name" value="AP2"/>
    <property type="match status" value="2"/>
</dbReference>
<dbReference type="SUPFAM" id="SSF54171">
    <property type="entry name" value="DNA-binding domain"/>
    <property type="match status" value="2"/>
</dbReference>
<dbReference type="PROSITE" id="PS51032">
    <property type="entry name" value="AP2_ERF"/>
    <property type="match status" value="2"/>
</dbReference>
<evidence type="ECO:0000250" key="1">
    <source>
        <dbReference type="UniProtKB" id="Q9LND1"/>
    </source>
</evidence>
<evidence type="ECO:0000255" key="2">
    <source>
        <dbReference type="PROSITE-ProRule" id="PRU00366"/>
    </source>
</evidence>
<evidence type="ECO:0000256" key="3">
    <source>
        <dbReference type="SAM" id="MobiDB-lite"/>
    </source>
</evidence>
<evidence type="ECO:0000269" key="4">
    <source>
    </source>
</evidence>
<evidence type="ECO:0000303" key="5">
    <source>
    </source>
</evidence>
<evidence type="ECO:0000305" key="6"/>
<evidence type="ECO:0000312" key="7">
    <source>
        <dbReference type="Araport" id="AT5G57390"/>
    </source>
</evidence>
<evidence type="ECO:0000312" key="8">
    <source>
        <dbReference type="EMBL" id="BAB08476.1"/>
    </source>
</evidence>
<comment type="function">
    <text evidence="1 4">Probably acts as a transcriptional activator. Binds to the GCC-box pathogenesis-related promoter element. May be involved in the regulation of gene expression by stress factors and by components of stress signal transduction pathways (By similarity). Involved in the regulation of floral organs size (PubMed:15988559).</text>
</comment>
<comment type="subcellular location">
    <subcellularLocation>
        <location evidence="6">Nucleus</location>
    </subcellularLocation>
</comment>
<comment type="tissue specificity">
    <text evidence="4">Expressed in roots, seedlings, inflorescence, and siliques. Also detected at low levels in leaves.</text>
</comment>
<comment type="developmental stage">
    <text evidence="4">Present in inflorescence meristem and later in young floral mersitems. Expressed in sepal, petal, stamen and carpel primordia. In petal, progressively confined to petal margin and epidermal cells. Restricted to sporogenous tissue in the stamen and to the medial ridge of the carpel. Present in tissues that develop from this ridge, such as placenta and ovule primordia. In ovules, first expressed in distal part of the funiculus and the outer integument, before being confined to the funiculus.</text>
</comment>
<comment type="similarity">
    <text evidence="6">Belongs to the AP2/ERF transcription factor family. AP2 subfamily.</text>
</comment>
<comment type="sequence caution" evidence="6">
    <conflict type="erroneous gene model prediction">
        <sequence resource="EMBL-CDS" id="BAB08476"/>
    </conflict>
</comment>
<name>AIL5_ARATH</name>
<protein>
    <recommendedName>
        <fullName evidence="5">AP2-like ethylene-responsive transcription factor AIL5</fullName>
    </recommendedName>
    <alternativeName>
        <fullName evidence="5">Protein AINTEGUMENTA-LIKE 5</fullName>
    </alternativeName>
</protein>
<sequence>MKNNNNKSSSSSSYDSSLSPSSSSSSHQNWLSFSLSNNNNNFNSSSNPNLTSSTSDHHHPHPSHLSLFQAFSTSPVERQDGSPGVSPSDATAVLSVYPGGPKLENFLGGGASTTTTRPMQQVQSLGGVVFSSDLQPPLHPPSAAEIYDSELKSIAASFLGNYSGGHSSEVSSVHKQQPNPLAVSEASPTPKKNVESFGQRTSIYRGVTRHRWTGRYEAHLWDNSCRREGQSRKGRQVYLGGYDKEDKAARAYDLAALKYWGPTTTTNFPISNYESELEEMKHMTRQEFVASLRRKSSGFSRGASMYRGVTRHHQHGRWQARIGRVAGNKDLYLGTFSTQEEAAEAYDIAAIKFRGLNAVTNFDISRYDVKSIASCNLPVGGLMPKPSPATAAADKTVDLSPSDSPSLTTPSLTFNVATPVNDHGGTFYHTGIPIKPDPADHYWSNIFGFQANPKAEMRPLANFGSDLHNPSPGYAIMPVMQEGENNFGGSFVGSDGYNNHSAASNPVSAIPLSSTTTMSNGNEGYGGNINWINNNISSSYQTAKSNLSVLHTPVFGLE</sequence>
<keyword id="KW-0010">Activator</keyword>
<keyword id="KW-0238">DNA-binding</keyword>
<keyword id="KW-0936">Ethylene signaling pathway</keyword>
<keyword id="KW-0539">Nucleus</keyword>
<keyword id="KW-1185">Reference proteome</keyword>
<keyword id="KW-0677">Repeat</keyword>
<keyword id="KW-0804">Transcription</keyword>
<keyword id="KW-0805">Transcription regulation</keyword>
<organism>
    <name type="scientific">Arabidopsis thaliana</name>
    <name type="common">Mouse-ear cress</name>
    <dbReference type="NCBI Taxonomy" id="3702"/>
    <lineage>
        <taxon>Eukaryota</taxon>
        <taxon>Viridiplantae</taxon>
        <taxon>Streptophyta</taxon>
        <taxon>Embryophyta</taxon>
        <taxon>Tracheophyta</taxon>
        <taxon>Spermatophyta</taxon>
        <taxon>Magnoliopsida</taxon>
        <taxon>eudicotyledons</taxon>
        <taxon>Gunneridae</taxon>
        <taxon>Pentapetalae</taxon>
        <taxon>rosids</taxon>
        <taxon>malvids</taxon>
        <taxon>Brassicales</taxon>
        <taxon>Brassicaceae</taxon>
        <taxon>Camelineae</taxon>
        <taxon>Arabidopsis</taxon>
    </lineage>
</organism>
<proteinExistence type="evidence at transcript level"/>
<feature type="chain" id="PRO_0000290365" description="AP2-like ethylene-responsive transcription factor AIL5">
    <location>
        <begin position="1"/>
        <end position="558"/>
    </location>
</feature>
<feature type="DNA-binding region" description="AP2/ERF 1" evidence="2">
    <location>
        <begin position="203"/>
        <end position="269"/>
    </location>
</feature>
<feature type="DNA-binding region" description="AP2/ERF 2" evidence="2">
    <location>
        <begin position="305"/>
        <end position="363"/>
    </location>
</feature>
<feature type="region of interest" description="Disordered" evidence="3">
    <location>
        <begin position="1"/>
        <end position="65"/>
    </location>
</feature>
<feature type="region of interest" description="Disordered" evidence="3">
    <location>
        <begin position="74"/>
        <end position="93"/>
    </location>
</feature>
<feature type="region of interest" description="Disordered" evidence="3">
    <location>
        <begin position="166"/>
        <end position="195"/>
    </location>
</feature>
<feature type="region of interest" description="Disordered" evidence="3">
    <location>
        <begin position="387"/>
        <end position="406"/>
    </location>
</feature>
<feature type="compositionally biased region" description="Low complexity" evidence="3">
    <location>
        <begin position="1"/>
        <end position="54"/>
    </location>
</feature>
<feature type="sequence conflict" description="In Ref. 1; AAS97942." evidence="6" ref="1">
    <location>
        <position position="13"/>
    </location>
</feature>
<gene>
    <name evidence="5" type="primary">AIL5</name>
    <name evidence="7" type="ordered locus">At5g57390</name>
    <name evidence="8" type="ORF">MSF19.5</name>
</gene>
<reference key="1">
    <citation type="submission" date="2004-03" db="EMBL/GenBank/DDBJ databases">
        <title>Molecular cloning, expression, phylogenetic and functional characterization of the Arabidopsis AP2/EREBP transcription factor family.</title>
        <authorList>
            <person name="Pan Y."/>
            <person name="Gong W."/>
            <person name="Liu D."/>
            <person name="Fu Q."/>
            <person name="Mei W.-Q."/>
            <person name="Song W.-Q."/>
            <person name="Ma L.-G."/>
            <person name="Luo J.-C."/>
            <person name="Deng X.-W."/>
            <person name="Zhu Y.-X."/>
        </authorList>
    </citation>
    <scope>NUCLEOTIDE SEQUENCE [MRNA]</scope>
</reference>
<reference key="2">
    <citation type="journal article" date="1998" name="DNA Res.">
        <title>Structural analysis of Arabidopsis thaliana chromosome 5. VIII. Sequence features of the regions of 1,081,958 bp covered by seventeen physically assigned P1 and TAC clones.</title>
        <authorList>
            <person name="Asamizu E."/>
            <person name="Sato S."/>
            <person name="Kaneko T."/>
            <person name="Nakamura Y."/>
            <person name="Kotani H."/>
            <person name="Miyajima N."/>
            <person name="Tabata S."/>
        </authorList>
    </citation>
    <scope>NUCLEOTIDE SEQUENCE [LARGE SCALE GENOMIC DNA]</scope>
    <source>
        <strain>cv. Columbia</strain>
    </source>
</reference>
<reference key="3">
    <citation type="journal article" date="2017" name="Plant J.">
        <title>Araport11: a complete reannotation of the Arabidopsis thaliana reference genome.</title>
        <authorList>
            <person name="Cheng C.Y."/>
            <person name="Krishnakumar V."/>
            <person name="Chan A.P."/>
            <person name="Thibaud-Nissen F."/>
            <person name="Schobel S."/>
            <person name="Town C.D."/>
        </authorList>
    </citation>
    <scope>GENOME REANNOTATION</scope>
    <source>
        <strain>cv. Columbia</strain>
    </source>
</reference>
<reference key="4">
    <citation type="journal article" date="2005" name="Plant Mol. Biol.">
        <title>AINTEGUMENTA-like (AIL) genes are expressed in young tissues and may specify meristematic or division-competent states.</title>
        <authorList>
            <person name="Nole-Wilson S."/>
            <person name="Tranby T.L."/>
            <person name="Krizek B.A."/>
        </authorList>
    </citation>
    <scope>FUNCTION</scope>
    <scope>TISSUE SPECIFICITY</scope>
    <scope>DEVELOPMENTAL STAGE</scope>
</reference>
<reference key="5">
    <citation type="journal article" date="2006" name="Plant Physiol.">
        <title>Genome-wide analysis of the ERF gene family in Arabidopsis and rice.</title>
        <authorList>
            <person name="Nakano T."/>
            <person name="Suzuki K."/>
            <person name="Fujimura T."/>
            <person name="Shinshi H."/>
        </authorList>
    </citation>
    <scope>GENE FAMILY</scope>
    <scope>NOMENCLATURE</scope>
</reference>